<keyword id="KW-0175">Coiled coil</keyword>
<keyword id="KW-0256">Endoplasmic reticulum</keyword>
<keyword id="KW-0931">ER-Golgi transport</keyword>
<keyword id="KW-0325">Glycoprotein</keyword>
<keyword id="KW-0333">Golgi apparatus</keyword>
<keyword id="KW-0472">Membrane</keyword>
<keyword id="KW-0488">Methylation</keyword>
<keyword id="KW-0653">Protein transport</keyword>
<keyword id="KW-1185">Reference proteome</keyword>
<keyword id="KW-0732">Signal</keyword>
<keyword id="KW-0812">Transmembrane</keyword>
<keyword id="KW-1133">Transmembrane helix</keyword>
<keyword id="KW-0813">Transport</keyword>
<gene>
    <name type="primary">CYB</name>
    <name type="ordered locus">At1g57620</name>
    <name type="ORF">T8L23.9</name>
</gene>
<dbReference type="EMBL" id="AC079733">
    <property type="protein sequence ID" value="AAG50754.1"/>
    <property type="molecule type" value="Genomic_DNA"/>
</dbReference>
<dbReference type="EMBL" id="CP002684">
    <property type="protein sequence ID" value="AEE33445.1"/>
    <property type="molecule type" value="Genomic_DNA"/>
</dbReference>
<dbReference type="EMBL" id="AK117498">
    <property type="protein sequence ID" value="BAC42161.1"/>
    <property type="molecule type" value="mRNA"/>
</dbReference>
<dbReference type="EMBL" id="BT005172">
    <property type="protein sequence ID" value="AAO50705.1"/>
    <property type="molecule type" value="mRNA"/>
</dbReference>
<dbReference type="EMBL" id="AY085744">
    <property type="protein sequence ID" value="AAM62962.1"/>
    <property type="molecule type" value="mRNA"/>
</dbReference>
<dbReference type="PIR" id="D96610">
    <property type="entry name" value="D96610"/>
</dbReference>
<dbReference type="RefSeq" id="NP_176075.1">
    <property type="nucleotide sequence ID" value="NM_104559.4"/>
</dbReference>
<dbReference type="SMR" id="Q9FVU0"/>
<dbReference type="BioGRID" id="27363">
    <property type="interactions" value="4"/>
</dbReference>
<dbReference type="FunCoup" id="Q9FVU0">
    <property type="interactions" value="4410"/>
</dbReference>
<dbReference type="IntAct" id="Q9FVU0">
    <property type="interactions" value="1"/>
</dbReference>
<dbReference type="STRING" id="3702.Q9FVU0"/>
<dbReference type="GlyCosmos" id="Q9FVU0">
    <property type="glycosylation" value="1 site, No reported glycans"/>
</dbReference>
<dbReference type="GlyGen" id="Q9FVU0">
    <property type="glycosylation" value="2 sites"/>
</dbReference>
<dbReference type="PaxDb" id="3702-AT1G57620.1"/>
<dbReference type="ProteomicsDB" id="248784"/>
<dbReference type="EnsemblPlants" id="AT1G57620.1">
    <property type="protein sequence ID" value="AT1G57620.1"/>
    <property type="gene ID" value="AT1G57620"/>
</dbReference>
<dbReference type="GeneID" id="842138"/>
<dbReference type="Gramene" id="AT1G57620.1">
    <property type="protein sequence ID" value="AT1G57620.1"/>
    <property type="gene ID" value="AT1G57620"/>
</dbReference>
<dbReference type="KEGG" id="ath:AT1G57620"/>
<dbReference type="Araport" id="AT1G57620"/>
<dbReference type="TAIR" id="AT1G57620">
    <property type="gene designation" value="CYB"/>
</dbReference>
<dbReference type="eggNOG" id="KOG1691">
    <property type="taxonomic scope" value="Eukaryota"/>
</dbReference>
<dbReference type="HOGENOM" id="CLU_066963_3_2_1"/>
<dbReference type="InParanoid" id="Q9FVU0"/>
<dbReference type="OMA" id="HHRENTT"/>
<dbReference type="OrthoDB" id="759142at2759"/>
<dbReference type="PhylomeDB" id="Q9FVU0"/>
<dbReference type="PRO" id="PR:Q9FVU0"/>
<dbReference type="Proteomes" id="UP000006548">
    <property type="component" value="Chromosome 1"/>
</dbReference>
<dbReference type="ExpressionAtlas" id="Q9FVU0">
    <property type="expression patterns" value="baseline and differential"/>
</dbReference>
<dbReference type="GO" id="GO:0005789">
    <property type="term" value="C:endoplasmic reticulum membrane"/>
    <property type="evidence" value="ECO:0007669"/>
    <property type="project" value="UniProtKB-SubCell"/>
</dbReference>
<dbReference type="GO" id="GO:0000139">
    <property type="term" value="C:Golgi membrane"/>
    <property type="evidence" value="ECO:0007669"/>
    <property type="project" value="UniProtKB-SubCell"/>
</dbReference>
<dbReference type="GO" id="GO:0006886">
    <property type="term" value="P:intracellular protein transport"/>
    <property type="evidence" value="ECO:0000315"/>
    <property type="project" value="TAIR"/>
</dbReference>
<dbReference type="GO" id="GO:0016192">
    <property type="term" value="P:vesicle-mediated transport"/>
    <property type="evidence" value="ECO:0007669"/>
    <property type="project" value="UniProtKB-KW"/>
</dbReference>
<dbReference type="InterPro" id="IPR015720">
    <property type="entry name" value="Emp24-like"/>
</dbReference>
<dbReference type="InterPro" id="IPR009038">
    <property type="entry name" value="GOLD_dom"/>
</dbReference>
<dbReference type="PANTHER" id="PTHR22811">
    <property type="entry name" value="TRANSMEMBRANE EMP24 DOMAIN-CONTAINING PROTEIN"/>
    <property type="match status" value="1"/>
</dbReference>
<dbReference type="Pfam" id="PF01105">
    <property type="entry name" value="EMP24_GP25L"/>
    <property type="match status" value="1"/>
</dbReference>
<dbReference type="SMART" id="SM01190">
    <property type="entry name" value="EMP24_GP25L"/>
    <property type="match status" value="1"/>
</dbReference>
<dbReference type="PROSITE" id="PS50866">
    <property type="entry name" value="GOLD"/>
    <property type="match status" value="1"/>
</dbReference>
<protein>
    <recommendedName>
        <fullName>Transmembrane emp24 domain-containing protein p24delta4</fullName>
    </recommendedName>
    <alternativeName>
        <fullName>Protein CYTOPLASMIC BODIES</fullName>
    </alternativeName>
    <alternativeName>
        <fullName>p24 family protein delta1b</fullName>
        <shortName>p24delta1b</shortName>
    </alternativeName>
    <alternativeName>
        <fullName>p24 family protein delta4</fullName>
        <shortName>p24delta4</shortName>
    </alternativeName>
</protein>
<accession>Q9FVU0</accession>
<sequence>MKKKMIPTTILLSALIFSLSPICEAVWLTVPHTGSKCVSEEIQSNVIVLADYLVISEEHSIFPTVSVKVTAPYGTVLHHRENTTNGQFAFTTQESGTYLACFEADAKSHGNKDFSINIDWKTGIAAKDWDSIARKEKIEGVELEFKKLEGAVEAIHENLIYLRNREAEMRIVSEKTNSRVAWYSIMSLGICIVVSGLQILYLKQYFEKKKLI</sequence>
<reference key="1">
    <citation type="journal article" date="2000" name="Nature">
        <title>Sequence and analysis of chromosome 1 of the plant Arabidopsis thaliana.</title>
        <authorList>
            <person name="Theologis A."/>
            <person name="Ecker J.R."/>
            <person name="Palm C.J."/>
            <person name="Federspiel N.A."/>
            <person name="Kaul S."/>
            <person name="White O."/>
            <person name="Alonso J."/>
            <person name="Altafi H."/>
            <person name="Araujo R."/>
            <person name="Bowman C.L."/>
            <person name="Brooks S.Y."/>
            <person name="Buehler E."/>
            <person name="Chan A."/>
            <person name="Chao Q."/>
            <person name="Chen H."/>
            <person name="Cheuk R.F."/>
            <person name="Chin C.W."/>
            <person name="Chung M.K."/>
            <person name="Conn L."/>
            <person name="Conway A.B."/>
            <person name="Conway A.R."/>
            <person name="Creasy T.H."/>
            <person name="Dewar K."/>
            <person name="Dunn P."/>
            <person name="Etgu P."/>
            <person name="Feldblyum T.V."/>
            <person name="Feng J.-D."/>
            <person name="Fong B."/>
            <person name="Fujii C.Y."/>
            <person name="Gill J.E."/>
            <person name="Goldsmith A.D."/>
            <person name="Haas B."/>
            <person name="Hansen N.F."/>
            <person name="Hughes B."/>
            <person name="Huizar L."/>
            <person name="Hunter J.L."/>
            <person name="Jenkins J."/>
            <person name="Johnson-Hopson C."/>
            <person name="Khan S."/>
            <person name="Khaykin E."/>
            <person name="Kim C.J."/>
            <person name="Koo H.L."/>
            <person name="Kremenetskaia I."/>
            <person name="Kurtz D.B."/>
            <person name="Kwan A."/>
            <person name="Lam B."/>
            <person name="Langin-Hooper S."/>
            <person name="Lee A."/>
            <person name="Lee J.M."/>
            <person name="Lenz C.A."/>
            <person name="Li J.H."/>
            <person name="Li Y.-P."/>
            <person name="Lin X."/>
            <person name="Liu S.X."/>
            <person name="Liu Z.A."/>
            <person name="Luros J.S."/>
            <person name="Maiti R."/>
            <person name="Marziali A."/>
            <person name="Militscher J."/>
            <person name="Miranda M."/>
            <person name="Nguyen M."/>
            <person name="Nierman W.C."/>
            <person name="Osborne B.I."/>
            <person name="Pai G."/>
            <person name="Peterson J."/>
            <person name="Pham P.K."/>
            <person name="Rizzo M."/>
            <person name="Rooney T."/>
            <person name="Rowley D."/>
            <person name="Sakano H."/>
            <person name="Salzberg S.L."/>
            <person name="Schwartz J.R."/>
            <person name="Shinn P."/>
            <person name="Southwick A.M."/>
            <person name="Sun H."/>
            <person name="Tallon L.J."/>
            <person name="Tambunga G."/>
            <person name="Toriumi M.J."/>
            <person name="Town C.D."/>
            <person name="Utterback T."/>
            <person name="Van Aken S."/>
            <person name="Vaysberg M."/>
            <person name="Vysotskaia V.S."/>
            <person name="Walker M."/>
            <person name="Wu D."/>
            <person name="Yu G."/>
            <person name="Fraser C.M."/>
            <person name="Venter J.C."/>
            <person name="Davis R.W."/>
        </authorList>
    </citation>
    <scope>NUCLEOTIDE SEQUENCE [LARGE SCALE GENOMIC DNA]</scope>
    <source>
        <strain>cv. Columbia</strain>
    </source>
</reference>
<reference key="2">
    <citation type="journal article" date="2017" name="Plant J.">
        <title>Araport11: a complete reannotation of the Arabidopsis thaliana reference genome.</title>
        <authorList>
            <person name="Cheng C.Y."/>
            <person name="Krishnakumar V."/>
            <person name="Chan A.P."/>
            <person name="Thibaud-Nissen F."/>
            <person name="Schobel S."/>
            <person name="Town C.D."/>
        </authorList>
    </citation>
    <scope>GENOME REANNOTATION</scope>
    <source>
        <strain>cv. Columbia</strain>
    </source>
</reference>
<reference key="3">
    <citation type="journal article" date="2002" name="Science">
        <title>Functional annotation of a full-length Arabidopsis cDNA collection.</title>
        <authorList>
            <person name="Seki M."/>
            <person name="Narusaka M."/>
            <person name="Kamiya A."/>
            <person name="Ishida J."/>
            <person name="Satou M."/>
            <person name="Sakurai T."/>
            <person name="Nakajima M."/>
            <person name="Enju A."/>
            <person name="Akiyama K."/>
            <person name="Oono Y."/>
            <person name="Muramatsu M."/>
            <person name="Hayashizaki Y."/>
            <person name="Kawai J."/>
            <person name="Carninci P."/>
            <person name="Itoh M."/>
            <person name="Ishii Y."/>
            <person name="Arakawa T."/>
            <person name="Shibata K."/>
            <person name="Shinagawa A."/>
            <person name="Shinozaki K."/>
        </authorList>
    </citation>
    <scope>NUCLEOTIDE SEQUENCE [LARGE SCALE MRNA]</scope>
    <source>
        <strain>cv. Columbia</strain>
    </source>
</reference>
<reference key="4">
    <citation type="journal article" date="2003" name="Science">
        <title>Empirical analysis of transcriptional activity in the Arabidopsis genome.</title>
        <authorList>
            <person name="Yamada K."/>
            <person name="Lim J."/>
            <person name="Dale J.M."/>
            <person name="Chen H."/>
            <person name="Shinn P."/>
            <person name="Palm C.J."/>
            <person name="Southwick A.M."/>
            <person name="Wu H.C."/>
            <person name="Kim C.J."/>
            <person name="Nguyen M."/>
            <person name="Pham P.K."/>
            <person name="Cheuk R.F."/>
            <person name="Karlin-Newmann G."/>
            <person name="Liu S.X."/>
            <person name="Lam B."/>
            <person name="Sakano H."/>
            <person name="Wu T."/>
            <person name="Yu G."/>
            <person name="Miranda M."/>
            <person name="Quach H.L."/>
            <person name="Tripp M."/>
            <person name="Chang C.H."/>
            <person name="Lee J.M."/>
            <person name="Toriumi M.J."/>
            <person name="Chan M.M."/>
            <person name="Tang C.C."/>
            <person name="Onodera C.S."/>
            <person name="Deng J.M."/>
            <person name="Akiyama K."/>
            <person name="Ansari Y."/>
            <person name="Arakawa T."/>
            <person name="Banh J."/>
            <person name="Banno F."/>
            <person name="Bowser L."/>
            <person name="Brooks S.Y."/>
            <person name="Carninci P."/>
            <person name="Chao Q."/>
            <person name="Choy N."/>
            <person name="Enju A."/>
            <person name="Goldsmith A.D."/>
            <person name="Gurjal M."/>
            <person name="Hansen N.F."/>
            <person name="Hayashizaki Y."/>
            <person name="Johnson-Hopson C."/>
            <person name="Hsuan V.W."/>
            <person name="Iida K."/>
            <person name="Karnes M."/>
            <person name="Khan S."/>
            <person name="Koesema E."/>
            <person name="Ishida J."/>
            <person name="Jiang P.X."/>
            <person name="Jones T."/>
            <person name="Kawai J."/>
            <person name="Kamiya A."/>
            <person name="Meyers C."/>
            <person name="Nakajima M."/>
            <person name="Narusaka M."/>
            <person name="Seki M."/>
            <person name="Sakurai T."/>
            <person name="Satou M."/>
            <person name="Tamse R."/>
            <person name="Vaysberg M."/>
            <person name="Wallender E.K."/>
            <person name="Wong C."/>
            <person name="Yamamura Y."/>
            <person name="Yuan S."/>
            <person name="Shinozaki K."/>
            <person name="Davis R.W."/>
            <person name="Theologis A."/>
            <person name="Ecker J.R."/>
        </authorList>
    </citation>
    <scope>NUCLEOTIDE SEQUENCE [LARGE SCALE MRNA]</scope>
    <source>
        <strain>cv. Columbia</strain>
    </source>
</reference>
<reference key="5">
    <citation type="submission" date="2002-03" db="EMBL/GenBank/DDBJ databases">
        <title>Full-length cDNA from Arabidopsis thaliana.</title>
        <authorList>
            <person name="Brover V.V."/>
            <person name="Troukhan M.E."/>
            <person name="Alexandrov N.A."/>
            <person name="Lu Y.-P."/>
            <person name="Flavell R.B."/>
            <person name="Feldmann K.A."/>
        </authorList>
    </citation>
    <scope>NUCLEOTIDE SEQUENCE [LARGE SCALE MRNA]</scope>
</reference>
<reference key="6">
    <citation type="journal article" date="2004" name="Plant Cell Physiol.">
        <title>Sorting signals in the cytosolic tail of plant p24 proteins involved in the interaction with the COPII coat.</title>
        <authorList>
            <person name="Contreras I."/>
            <person name="Yang Y."/>
            <person name="Robinson D.G."/>
            <person name="Aniento F."/>
        </authorList>
    </citation>
    <scope>DOMAIN</scope>
    <scope>MUTAGENESIS OF 205-TYR-PHE-206 AND 209-LYS-LYS-210</scope>
    <scope>SUBCELLULAR LOCATION</scope>
    <scope>SUBUNIT</scope>
</reference>
<reference key="7">
    <citation type="journal article" date="2012" name="J. Exp. Bot.">
        <title>Coupled transport of Arabidopsis p24 proteins at the ER-Golgi interface.</title>
        <authorList>
            <person name="Montesinos J.C."/>
            <person name="Sturm S."/>
            <person name="Langhans M."/>
            <person name="Hillmer S."/>
            <person name="Marcote M.J."/>
            <person name="Robinson D.G."/>
            <person name="Aniento F."/>
        </authorList>
    </citation>
    <scope>GENE FAMILY</scope>
    <scope>NOMENCLATURE</scope>
</reference>
<reference key="8">
    <citation type="journal article" date="2012" name="Traffic">
        <title>Subclass-specific localization and trafficking of Arabidopsis p24 proteins in the ER-Golgi interface.</title>
        <authorList>
            <person name="Chen J."/>
            <person name="Qi X."/>
            <person name="Zheng H."/>
        </authorList>
    </citation>
    <scope>GENE FAMILY</scope>
    <scope>SUBCELLULAR LOCATION</scope>
    <scope>COILED-COIL DOMAIN</scope>
</reference>
<reference key="9">
    <citation type="journal article" date="2014" name="Plant J.">
        <title>Trafficking of the myrosinase-associated protein GLL23 requires NUC/MVP1/GOLD36/ERMO3 and the p24 protein CYB.</title>
        <authorList>
            <person name="Jancowski S."/>
            <person name="Catching A."/>
            <person name="Pighin J."/>
            <person name="Kudo T."/>
            <person name="Foissner I."/>
            <person name="Wasteneys G.O."/>
        </authorList>
    </citation>
    <scope>FUNCTION</scope>
    <scope>MUTAGENESIS OF GLY-96</scope>
    <scope>DISRUPTION PHENOTYPE</scope>
    <scope>SUBCELLULAR LOCATION</scope>
</reference>
<proteinExistence type="evidence at protein level"/>
<comment type="function">
    <text evidence="5">Involved in vesicular protein trafficking. Mainly functions in the early secretory pathway. Required for trafficking GLL23, a component of the PYK10 complex. May act as a receptor facilitating its packing into COPII carriers and export from the endoplasmic reticulum.</text>
</comment>
<comment type="subunit">
    <text evidence="1 4">Probably oligomerizes with other members of the EMP24/GP25L family (By similarity). Associates with the COPI vesicle coat (coatomer). Associates with the COPII vesicle coat (coatomer).</text>
</comment>
<comment type="subcellular location">
    <subcellularLocation>
        <location>Endoplasmic reticulum membrane</location>
        <topology>Single-pass type I membrane protein</topology>
    </subcellularLocation>
    <subcellularLocation>
        <location>Golgi apparatus membrane</location>
        <topology>Single-pass type I membrane protein</topology>
    </subcellularLocation>
    <text>Cycles between the endoplasmic reticulum and Golgi via COPI and COPII dependent pathways. Mainly located in endoplasmic reticulum.</text>
</comment>
<comment type="domain">
    <text evidence="4">The cytoplasmic C-terminal domain contains a functional dilysine-retrieval motif, which is involved in the retrograde Golgi-to-ER transport of the protein.</text>
</comment>
<comment type="disruption phenotype">
    <text evidence="5">Formation of cytoplasmic bodies.</text>
</comment>
<comment type="similarity">
    <text evidence="6">Belongs to the EMP24/GP25L family.</text>
</comment>
<evidence type="ECO:0000250" key="1"/>
<evidence type="ECO:0000255" key="2"/>
<evidence type="ECO:0000255" key="3">
    <source>
        <dbReference type="PROSITE-ProRule" id="PRU00096"/>
    </source>
</evidence>
<evidence type="ECO:0000269" key="4">
    <source>
    </source>
</evidence>
<evidence type="ECO:0000269" key="5">
    <source>
    </source>
</evidence>
<evidence type="ECO:0000305" key="6"/>
<organism>
    <name type="scientific">Arabidopsis thaliana</name>
    <name type="common">Mouse-ear cress</name>
    <dbReference type="NCBI Taxonomy" id="3702"/>
    <lineage>
        <taxon>Eukaryota</taxon>
        <taxon>Viridiplantae</taxon>
        <taxon>Streptophyta</taxon>
        <taxon>Embryophyta</taxon>
        <taxon>Tracheophyta</taxon>
        <taxon>Spermatophyta</taxon>
        <taxon>Magnoliopsida</taxon>
        <taxon>eudicotyledons</taxon>
        <taxon>Gunneridae</taxon>
        <taxon>Pentapetalae</taxon>
        <taxon>rosids</taxon>
        <taxon>malvids</taxon>
        <taxon>Brassicales</taxon>
        <taxon>Brassicaceae</taxon>
        <taxon>Camelineae</taxon>
        <taxon>Arabidopsis</taxon>
    </lineage>
</organism>
<name>P24D4_ARATH</name>
<feature type="signal peptide" evidence="2">
    <location>
        <begin position="1"/>
        <end position="25"/>
    </location>
</feature>
<feature type="chain" id="PRO_0000419784" description="Transmembrane emp24 domain-containing protein p24delta4">
    <location>
        <begin position="26"/>
        <end position="212"/>
    </location>
</feature>
<feature type="topological domain" description="Lumenal" evidence="2">
    <location>
        <begin position="26"/>
        <end position="179"/>
    </location>
</feature>
<feature type="transmembrane region" description="Helical" evidence="2">
    <location>
        <begin position="180"/>
        <end position="200"/>
    </location>
</feature>
<feature type="topological domain" description="Cytoplasmic" evidence="2">
    <location>
        <begin position="201"/>
        <end position="212"/>
    </location>
</feature>
<feature type="domain" description="GOLD" evidence="3">
    <location>
        <begin position="35"/>
        <end position="147"/>
    </location>
</feature>
<feature type="coiled-coil region" evidence="2">
    <location>
        <begin position="133"/>
        <end position="155"/>
    </location>
</feature>
<feature type="short sequence motif" description="COPI vesicle coat-binding">
    <location>
        <begin position="205"/>
        <end position="212"/>
    </location>
</feature>
<feature type="short sequence motif" description="COPII vesicle coat-binding">
    <location>
        <begin position="205"/>
        <end position="206"/>
    </location>
</feature>
<feature type="modified residue" description="Omega-N-methylated arginine" evidence="1">
    <location>
        <position position="165"/>
    </location>
</feature>
<feature type="modified residue" description="Omega-N-methylated arginine" evidence="1">
    <location>
        <position position="170"/>
    </location>
</feature>
<feature type="glycosylation site" description="N-linked (GlcNAc...) asparagine" evidence="2">
    <location>
        <position position="82"/>
    </location>
</feature>
<feature type="mutagenesis site" description="In cyb-1; loss of trafficking between ER and Golgi and formation of cytoplasmic bodies." evidence="5">
    <original>G</original>
    <variation>E</variation>
    <location>
        <position position="96"/>
    </location>
</feature>
<feature type="mutagenesis site" description="Disrupts association with COPII vesicle coat. Slightly reduces association with COPI vesicle coat." evidence="4">
    <original>YF</original>
    <variation>AA</variation>
    <location>
        <begin position="205"/>
        <end position="206"/>
    </location>
</feature>
<feature type="mutagenesis site" description="Disrupts association with COPI vesicle coat but favors association with COPII vesicle coat." evidence="4">
    <original>KK</original>
    <variation>SS</variation>
    <location>
        <begin position="209"/>
        <end position="210"/>
    </location>
</feature>